<proteinExistence type="inferred from homology"/>
<organism>
    <name type="scientific">Naja atra</name>
    <name type="common">Chinese cobra</name>
    <dbReference type="NCBI Taxonomy" id="8656"/>
    <lineage>
        <taxon>Eukaryota</taxon>
        <taxon>Metazoa</taxon>
        <taxon>Chordata</taxon>
        <taxon>Craniata</taxon>
        <taxon>Vertebrata</taxon>
        <taxon>Euteleostomi</taxon>
        <taxon>Lepidosauria</taxon>
        <taxon>Squamata</taxon>
        <taxon>Bifurcata</taxon>
        <taxon>Unidentata</taxon>
        <taxon>Episquamata</taxon>
        <taxon>Toxicofera</taxon>
        <taxon>Serpentes</taxon>
        <taxon>Colubroidea</taxon>
        <taxon>Elapidae</taxon>
        <taxon>Elapinae</taxon>
        <taxon>Naja</taxon>
    </lineage>
</organism>
<accession>Q91136</accession>
<dbReference type="EMBL" id="X94316">
    <property type="protein sequence ID" value="CAA63977.1"/>
    <property type="molecule type" value="mRNA"/>
</dbReference>
<dbReference type="SMR" id="Q91136"/>
<dbReference type="GO" id="GO:0005576">
    <property type="term" value="C:extracellular region"/>
    <property type="evidence" value="ECO:0007669"/>
    <property type="project" value="UniProtKB-SubCell"/>
</dbReference>
<dbReference type="GO" id="GO:0016020">
    <property type="term" value="C:membrane"/>
    <property type="evidence" value="ECO:0007669"/>
    <property type="project" value="UniProtKB-KW"/>
</dbReference>
<dbReference type="GO" id="GO:0044218">
    <property type="term" value="C:other organism cell membrane"/>
    <property type="evidence" value="ECO:0007669"/>
    <property type="project" value="UniProtKB-KW"/>
</dbReference>
<dbReference type="GO" id="GO:0090729">
    <property type="term" value="F:toxin activity"/>
    <property type="evidence" value="ECO:0007669"/>
    <property type="project" value="UniProtKB-KW"/>
</dbReference>
<dbReference type="GO" id="GO:0031640">
    <property type="term" value="P:killing of cells of another organism"/>
    <property type="evidence" value="ECO:0007669"/>
    <property type="project" value="UniProtKB-KW"/>
</dbReference>
<dbReference type="CDD" id="cd00206">
    <property type="entry name" value="TFP_snake_toxin"/>
    <property type="match status" value="1"/>
</dbReference>
<dbReference type="FunFam" id="2.10.60.10:FF:000024">
    <property type="entry name" value="Cytotoxin 1"/>
    <property type="match status" value="1"/>
</dbReference>
<dbReference type="Gene3D" id="2.10.60.10">
    <property type="entry name" value="CD59"/>
    <property type="match status" value="1"/>
</dbReference>
<dbReference type="InterPro" id="IPR003572">
    <property type="entry name" value="Cytotoxin_Cobra"/>
</dbReference>
<dbReference type="InterPro" id="IPR003571">
    <property type="entry name" value="Snake_3FTx"/>
</dbReference>
<dbReference type="InterPro" id="IPR045860">
    <property type="entry name" value="Snake_toxin-like_sf"/>
</dbReference>
<dbReference type="InterPro" id="IPR018354">
    <property type="entry name" value="Snake_toxin_con_site"/>
</dbReference>
<dbReference type="InterPro" id="IPR054131">
    <property type="entry name" value="Toxin_cobra-type"/>
</dbReference>
<dbReference type="Pfam" id="PF21947">
    <property type="entry name" value="Toxin_cobra-type"/>
    <property type="match status" value="1"/>
</dbReference>
<dbReference type="PRINTS" id="PR00282">
    <property type="entry name" value="CYTOTOXIN"/>
</dbReference>
<dbReference type="SUPFAM" id="SSF57302">
    <property type="entry name" value="Snake toxin-like"/>
    <property type="match status" value="1"/>
</dbReference>
<dbReference type="PROSITE" id="PS00272">
    <property type="entry name" value="SNAKE_TOXIN"/>
    <property type="match status" value="1"/>
</dbReference>
<comment type="function">
    <text evidence="2 3">Shows cytolytic activity on many different cells by forming pore in lipid membranes. In vivo, increases heart rate or kills the animal by cardiac arrest. In addition, it binds to heparin with high affinity, interacts with Kv channel-interacting protein 1 (KCNIP1) in a calcium-independent manner, and binds to integrin alpha-V/beta-3 (ITGAV/ITGB3) with moderate affinity.</text>
</comment>
<comment type="subunit">
    <text evidence="2">Monomer in solution; Homodimer and oligomer in the presence of negatively charged lipids forming a pore with a size ranging between 20 and 30 Angstroms.</text>
</comment>
<comment type="subcellular location">
    <subcellularLocation>
        <location evidence="1">Secreted</location>
    </subcellularLocation>
    <subcellularLocation>
        <location evidence="2">Target cell membrane</location>
    </subcellularLocation>
</comment>
<comment type="tissue specificity">
    <text evidence="4">Expressed by the venom gland.</text>
</comment>
<comment type="miscellaneous">
    <text evidence="4">Is classified as a S-type cytotoxin, since a serine residue stands at position 49 (Ser-29 in standard classification).</text>
</comment>
<comment type="similarity">
    <text evidence="4">Belongs to the three-finger toxin family. Short-chain subfamily. Type IA cytotoxin sub-subfamily.</text>
</comment>
<evidence type="ECO:0000250" key="1"/>
<evidence type="ECO:0000250" key="2">
    <source>
        <dbReference type="UniProtKB" id="P60301"/>
    </source>
</evidence>
<evidence type="ECO:0000250" key="3">
    <source>
        <dbReference type="UniProtKB" id="P60304"/>
    </source>
</evidence>
<evidence type="ECO:0000305" key="4"/>
<protein>
    <recommendedName>
        <fullName>Cytotoxin I-like T-15</fullName>
    </recommendedName>
    <alternativeName>
        <fullName>Cardiotoxin I-like T-15</fullName>
    </alternativeName>
</protein>
<name>3SATF_NAJAT</name>
<sequence length="81" mass="8996">MKTLLLTLVVVTIVCLDLGYTLKCNKLIPIASKTCTAGKNLCYKMFMMSDLTIPVKRGCIDVCPKNSLLVKYVCCNTDRCN</sequence>
<reference key="1">
    <citation type="submission" date="1995-12" db="EMBL/GenBank/DDBJ databases">
        <title>Nucleotide sequence encoding cardiotoxin I-like protein with Thr-15 from Naja naja atra.</title>
        <authorList>
            <person name="Chang L.-S."/>
            <person name="Lin J."/>
            <person name="Wu P.-F."/>
        </authorList>
    </citation>
    <scope>NUCLEOTIDE SEQUENCE [MRNA]</scope>
    <source>
        <tissue>Venom gland</tissue>
    </source>
</reference>
<feature type="signal peptide" evidence="1">
    <location>
        <begin position="1"/>
        <end position="21"/>
    </location>
</feature>
<feature type="chain" id="PRO_0000035388" description="Cytotoxin I-like T-15">
    <location>
        <begin position="22"/>
        <end position="81"/>
    </location>
</feature>
<feature type="disulfide bond" evidence="2">
    <location>
        <begin position="24"/>
        <end position="42"/>
    </location>
</feature>
<feature type="disulfide bond" evidence="2">
    <location>
        <begin position="35"/>
        <end position="59"/>
    </location>
</feature>
<feature type="disulfide bond" evidence="2">
    <location>
        <begin position="63"/>
        <end position="74"/>
    </location>
</feature>
<feature type="disulfide bond" evidence="2">
    <location>
        <begin position="75"/>
        <end position="80"/>
    </location>
</feature>
<keyword id="KW-0123">Cardiotoxin</keyword>
<keyword id="KW-0204">Cytolysis</keyword>
<keyword id="KW-1015">Disulfide bond</keyword>
<keyword id="KW-0472">Membrane</keyword>
<keyword id="KW-0964">Secreted</keyword>
<keyword id="KW-0732">Signal</keyword>
<keyword id="KW-1052">Target cell membrane</keyword>
<keyword id="KW-1053">Target membrane</keyword>
<keyword id="KW-0800">Toxin</keyword>